<protein>
    <recommendedName>
        <fullName evidence="1">UDP-3-O-acyl-N-acetylglucosamine deacetylase</fullName>
        <shortName evidence="1">UDP-3-O-acyl-GlcNAc deacetylase</shortName>
        <ecNumber evidence="1">3.5.1.108</ecNumber>
    </recommendedName>
    <alternativeName>
        <fullName evidence="1">UDP-3-O-[R-3-hydroxymyristoyl]-N-acetylglucosamine deacetylase</fullName>
    </alternativeName>
</protein>
<evidence type="ECO:0000255" key="1">
    <source>
        <dbReference type="HAMAP-Rule" id="MF_00388"/>
    </source>
</evidence>
<feature type="chain" id="PRO_1000122832" description="UDP-3-O-acyl-N-acetylglucosamine deacetylase">
    <location>
        <begin position="1"/>
        <end position="303"/>
    </location>
</feature>
<feature type="active site" description="Proton donor" evidence="1">
    <location>
        <position position="264"/>
    </location>
</feature>
<feature type="binding site" evidence="1">
    <location>
        <position position="78"/>
    </location>
    <ligand>
        <name>Zn(2+)</name>
        <dbReference type="ChEBI" id="CHEBI:29105"/>
    </ligand>
</feature>
<feature type="binding site" evidence="1">
    <location>
        <position position="237"/>
    </location>
    <ligand>
        <name>Zn(2+)</name>
        <dbReference type="ChEBI" id="CHEBI:29105"/>
    </ligand>
</feature>
<feature type="binding site" evidence="1">
    <location>
        <position position="241"/>
    </location>
    <ligand>
        <name>Zn(2+)</name>
        <dbReference type="ChEBI" id="CHEBI:29105"/>
    </ligand>
</feature>
<accession>B0RV99</accession>
<comment type="function">
    <text evidence="1">Catalyzes the hydrolysis of UDP-3-O-myristoyl-N-acetylglucosamine to form UDP-3-O-myristoylglucosamine and acetate, the committed step in lipid A biosynthesis.</text>
</comment>
<comment type="catalytic activity">
    <reaction evidence="1">
        <text>a UDP-3-O-[(3R)-3-hydroxyacyl]-N-acetyl-alpha-D-glucosamine + H2O = a UDP-3-O-[(3R)-3-hydroxyacyl]-alpha-D-glucosamine + acetate</text>
        <dbReference type="Rhea" id="RHEA:67816"/>
        <dbReference type="ChEBI" id="CHEBI:15377"/>
        <dbReference type="ChEBI" id="CHEBI:30089"/>
        <dbReference type="ChEBI" id="CHEBI:137740"/>
        <dbReference type="ChEBI" id="CHEBI:173225"/>
        <dbReference type="EC" id="3.5.1.108"/>
    </reaction>
</comment>
<comment type="cofactor">
    <cofactor evidence="1">
        <name>Zn(2+)</name>
        <dbReference type="ChEBI" id="CHEBI:29105"/>
    </cofactor>
</comment>
<comment type="pathway">
    <text evidence="1">Glycolipid biosynthesis; lipid IV(A) biosynthesis; lipid IV(A) from (3R)-3-hydroxytetradecanoyl-[acyl-carrier-protein] and UDP-N-acetyl-alpha-D-glucosamine: step 2/6.</text>
</comment>
<comment type="similarity">
    <text evidence="1">Belongs to the LpxC family.</text>
</comment>
<organism>
    <name type="scientific">Xanthomonas campestris pv. campestris (strain B100)</name>
    <dbReference type="NCBI Taxonomy" id="509169"/>
    <lineage>
        <taxon>Bacteria</taxon>
        <taxon>Pseudomonadati</taxon>
        <taxon>Pseudomonadota</taxon>
        <taxon>Gammaproteobacteria</taxon>
        <taxon>Lysobacterales</taxon>
        <taxon>Lysobacteraceae</taxon>
        <taxon>Xanthomonas</taxon>
    </lineage>
</organism>
<keyword id="KW-0378">Hydrolase</keyword>
<keyword id="KW-0441">Lipid A biosynthesis</keyword>
<keyword id="KW-0444">Lipid biosynthesis</keyword>
<keyword id="KW-0443">Lipid metabolism</keyword>
<keyword id="KW-0479">Metal-binding</keyword>
<keyword id="KW-0862">Zinc</keyword>
<dbReference type="EC" id="3.5.1.108" evidence="1"/>
<dbReference type="EMBL" id="AM920689">
    <property type="protein sequence ID" value="CAP52990.1"/>
    <property type="molecule type" value="Genomic_DNA"/>
</dbReference>
<dbReference type="SMR" id="B0RV99"/>
<dbReference type="KEGG" id="xca:xcc-b100_3625"/>
<dbReference type="HOGENOM" id="CLU_046528_1_0_6"/>
<dbReference type="UniPathway" id="UPA00359">
    <property type="reaction ID" value="UER00478"/>
</dbReference>
<dbReference type="Proteomes" id="UP000001188">
    <property type="component" value="Chromosome"/>
</dbReference>
<dbReference type="GO" id="GO:0016020">
    <property type="term" value="C:membrane"/>
    <property type="evidence" value="ECO:0007669"/>
    <property type="project" value="GOC"/>
</dbReference>
<dbReference type="GO" id="GO:0046872">
    <property type="term" value="F:metal ion binding"/>
    <property type="evidence" value="ECO:0007669"/>
    <property type="project" value="UniProtKB-KW"/>
</dbReference>
<dbReference type="GO" id="GO:0103117">
    <property type="term" value="F:UDP-3-O-acyl-N-acetylglucosamine deacetylase activity"/>
    <property type="evidence" value="ECO:0007669"/>
    <property type="project" value="UniProtKB-UniRule"/>
</dbReference>
<dbReference type="GO" id="GO:0009245">
    <property type="term" value="P:lipid A biosynthetic process"/>
    <property type="evidence" value="ECO:0007669"/>
    <property type="project" value="UniProtKB-UniRule"/>
</dbReference>
<dbReference type="Gene3D" id="3.30.230.20">
    <property type="entry name" value="lpxc deacetylase, domain 1"/>
    <property type="match status" value="1"/>
</dbReference>
<dbReference type="Gene3D" id="3.30.1700.10">
    <property type="entry name" value="lpxc deacetylase, domain 2"/>
    <property type="match status" value="1"/>
</dbReference>
<dbReference type="HAMAP" id="MF_00388">
    <property type="entry name" value="LpxC"/>
    <property type="match status" value="1"/>
</dbReference>
<dbReference type="InterPro" id="IPR020568">
    <property type="entry name" value="Ribosomal_Su5_D2-typ_SF"/>
</dbReference>
<dbReference type="InterPro" id="IPR004463">
    <property type="entry name" value="UDP-acyl_GlcNac_deAcase"/>
</dbReference>
<dbReference type="InterPro" id="IPR011334">
    <property type="entry name" value="UDP-acyl_GlcNac_deAcase_C"/>
</dbReference>
<dbReference type="InterPro" id="IPR015870">
    <property type="entry name" value="UDP-acyl_N-AcGlcN_deAcase_N"/>
</dbReference>
<dbReference type="NCBIfam" id="TIGR00325">
    <property type="entry name" value="lpxC"/>
    <property type="match status" value="1"/>
</dbReference>
<dbReference type="PANTHER" id="PTHR33694">
    <property type="entry name" value="UDP-3-O-ACYL-N-ACETYLGLUCOSAMINE DEACETYLASE 1, MITOCHONDRIAL-RELATED"/>
    <property type="match status" value="1"/>
</dbReference>
<dbReference type="PANTHER" id="PTHR33694:SF1">
    <property type="entry name" value="UDP-3-O-ACYL-N-ACETYLGLUCOSAMINE DEACETYLASE 1, MITOCHONDRIAL-RELATED"/>
    <property type="match status" value="1"/>
</dbReference>
<dbReference type="Pfam" id="PF03331">
    <property type="entry name" value="LpxC"/>
    <property type="match status" value="1"/>
</dbReference>
<dbReference type="SUPFAM" id="SSF54211">
    <property type="entry name" value="Ribosomal protein S5 domain 2-like"/>
    <property type="match status" value="2"/>
</dbReference>
<gene>
    <name evidence="1" type="primary">lpxC</name>
    <name type="ordered locus">xcc-b100_3625</name>
</gene>
<name>LPXC_XANCB</name>
<reference key="1">
    <citation type="journal article" date="2008" name="J. Biotechnol.">
        <title>The genome of Xanthomonas campestris pv. campestris B100 and its use for the reconstruction of metabolic pathways involved in xanthan biosynthesis.</title>
        <authorList>
            <person name="Vorhoelter F.-J."/>
            <person name="Schneiker S."/>
            <person name="Goesmann A."/>
            <person name="Krause L."/>
            <person name="Bekel T."/>
            <person name="Kaiser O."/>
            <person name="Linke B."/>
            <person name="Patschkowski T."/>
            <person name="Rueckert C."/>
            <person name="Schmid J."/>
            <person name="Sidhu V.K."/>
            <person name="Sieber V."/>
            <person name="Tauch A."/>
            <person name="Watt S.A."/>
            <person name="Weisshaar B."/>
            <person name="Becker A."/>
            <person name="Niehaus K."/>
            <person name="Puehler A."/>
        </authorList>
    </citation>
    <scope>NUCLEOTIDE SEQUENCE [LARGE SCALE GENOMIC DNA]</scope>
    <source>
        <strain>B100</strain>
    </source>
</reference>
<proteinExistence type="inferred from homology"/>
<sequence>MTQQRTLKNTIRATGVGLHSGDKVYMTLRPAPVDHGIVFRRVDLEPVVEVPADAELVTETTLCTGLTCNGAKIQTVEHLMSALAGLGVDNVIVELSSAELPIMDGSSGPFVFLLQSAGIVEQNKAKRFIRIKQPVEVREGDKVARFEPYEGYKLGFTIEFNHPMIPAKQSRQEIEFSTSAYVKEISRARTFGFMRDLEYMRERNLGLGGSMDNAIVLDEFRVLNEDGLRYTNEFVRHKILDAIGDLYLAGGAILGAYEGFKSGHALNNKLVRALLADQAAWEWVSFPEGTEQSPVTYASPVYA</sequence>